<sequence>MSTSSSAVSQLKNSPLAGNINYEPTVWSRADALKVNENDPTTTQPLVSADFPVMSDTVFIWDTMPLRELDGTVVSVNGWSVILTLTADRHPNDPQYLDANGRYDIKRDWEDRHGRARMSYWYSRTGKDWIFGGRVMAEGVSPTTREWAGTPILLNDKGDIDLYYTCVTPGAAIAKVRGRIVTSDQGVELKDFTQVKKLFEADGTYYQTEAQNSSWNFRDPSPFIDPNDGKLYMVFEGNVAGERGSHTVGAAELGPVPPGHEDVGGARFQVGCIGLAVAKDLSGEEWEILPPLVTAVGVNDQTERPHYVFQDGKYYLFTISHKFTYAEGLTGPDGVYGFVGEHLFGPYRPMNASGLVLGNPPEQPFQTYSHCVMPNGLVTSFIDSVPTEGEDYRIGGTEAPTVRILLKGDRSFVQEEYDYGYIPAMKDVTLS</sequence>
<keyword id="KW-0119">Carbohydrate metabolism</keyword>
<keyword id="KW-0903">Direct protein sequencing</keyword>
<keyword id="KW-0328">Glycosyltransferase</keyword>
<keyword id="KW-0614">Plasmid</keyword>
<keyword id="KW-0964">Secreted</keyword>
<keyword id="KW-0808">Transferase</keyword>
<dbReference type="EC" id="2.4.1.10" evidence="2"/>
<dbReference type="EMBL" id="AF345638">
    <property type="protein sequence ID" value="AAK49951.1"/>
    <property type="molecule type" value="Genomic_DNA"/>
</dbReference>
<dbReference type="SMR" id="Q71RT3"/>
<dbReference type="CAZy" id="GH68">
    <property type="family name" value="Glycoside Hydrolase Family 68"/>
</dbReference>
<dbReference type="GO" id="GO:0005576">
    <property type="term" value="C:extracellular region"/>
    <property type="evidence" value="ECO:0007669"/>
    <property type="project" value="UniProtKB-SubCell"/>
</dbReference>
<dbReference type="GO" id="GO:0050053">
    <property type="term" value="F:levansucrase activity"/>
    <property type="evidence" value="ECO:0007669"/>
    <property type="project" value="UniProtKB-EC"/>
</dbReference>
<dbReference type="GO" id="GO:0009758">
    <property type="term" value="P:carbohydrate utilization"/>
    <property type="evidence" value="ECO:0007669"/>
    <property type="project" value="InterPro"/>
</dbReference>
<dbReference type="CDD" id="cd08997">
    <property type="entry name" value="GH68"/>
    <property type="match status" value="1"/>
</dbReference>
<dbReference type="FunFam" id="2.115.10.20:FF:000007">
    <property type="entry name" value="Levansucrase LscB"/>
    <property type="match status" value="1"/>
</dbReference>
<dbReference type="Gene3D" id="2.115.10.20">
    <property type="entry name" value="Glycosyl hydrolase domain, family 43"/>
    <property type="match status" value="1"/>
</dbReference>
<dbReference type="InterPro" id="IPR003469">
    <property type="entry name" value="Glyco_hydro_68"/>
</dbReference>
<dbReference type="InterPro" id="IPR023296">
    <property type="entry name" value="Glyco_hydro_beta-prop_sf"/>
</dbReference>
<dbReference type="Pfam" id="PF02435">
    <property type="entry name" value="Glyco_hydro_68"/>
    <property type="match status" value="1"/>
</dbReference>
<dbReference type="SUPFAM" id="SSF75005">
    <property type="entry name" value="Arabinanase/levansucrase/invertase"/>
    <property type="match status" value="1"/>
</dbReference>
<reference key="1">
    <citation type="journal article" date="2001" name="J. Bacteriol.">
        <title>Characterization and mutational analysis of three allelic lsc genes encoding levansucrase in Pseudomonas syringae.</title>
        <authorList>
            <person name="Li H."/>
            <person name="Ullrich M.S."/>
        </authorList>
    </citation>
    <scope>NUCLEOTIDE SEQUENCE [GENOMIC DNA]</scope>
    <scope>PROTEIN SEQUENCE OF 2-22</scope>
    <scope>FUNCTION</scope>
    <scope>CATALYTIC ACTIVITY</scope>
    <scope>SUBCELLULAR LOCATION</scope>
    <scope>DISRUPTION PHENOTYPE</scope>
    <source>
        <strain>PG4180</strain>
    </source>
</reference>
<reference key="2">
    <citation type="journal article" date="2006" name="FEMS Microbiol. Lett.">
        <title>Thermo-responsive expression and differential secretion of the extracellular enzyme levansucrase in the plant pathogenic bacterium Pseudomonas syringae pv. glycinea.</title>
        <authorList>
            <person name="Li H."/>
            <person name="Schenk A."/>
            <person name="Srivastava A."/>
            <person name="Zhurina D."/>
            <person name="Ullrich M.S."/>
        </authorList>
    </citation>
    <scope>SUBCELLULAR LOCATION</scope>
    <scope>INDUCTION</scope>
    <source>
        <strain>PG4180</strain>
    </source>
</reference>
<reference key="3">
    <citation type="journal article" date="2014" name="BMC Microbiol.">
        <title>The conserved upstream region of lscB/C determines expression of different levansucrase genes in plant pathogen Pseudomonas syringae.</title>
        <authorList>
            <person name="Khandekar S."/>
            <person name="Srivastava A."/>
            <person name="Pletzer D."/>
            <person name="Stahl A."/>
            <person name="Ullrich M.S."/>
        </authorList>
    </citation>
    <scope>TRANSCRIPTIONAL REGULATION</scope>
    <scope>IDENTIFICATION BY MASS SPECTROMETRY</scope>
    <source>
        <strain>PG4180</strain>
    </source>
</reference>
<reference key="4">
    <citation type="journal article" date="2016" name="Mol. Microbiol.">
        <title>The bacteriophage-derived transcriptional regulator, LscR, activates the expression of levansucrase genes in Pseudomonas syringae.</title>
        <authorList>
            <person name="Abdallah K."/>
            <person name="Hartman K."/>
            <person name="Pletzer D."/>
            <person name="Zhurina D."/>
            <person name="Ullrich M.S."/>
        </authorList>
    </citation>
    <scope>TRANSCRIPTIONAL REGULATION</scope>
    <source>
        <strain>PG4180</strain>
    </source>
</reference>
<feature type="chain" id="PRO_0000459749" description="Levansucrase LscB">
    <location>
        <begin position="1"/>
        <end position="431"/>
    </location>
</feature>
<feature type="active site" description="Nucleophile" evidence="1">
    <location>
        <position position="62"/>
    </location>
</feature>
<feature type="active site" description="Proton donor/acceptor" evidence="1">
    <location>
        <position position="303"/>
    </location>
</feature>
<feature type="binding site" evidence="1">
    <location>
        <position position="61"/>
    </location>
    <ligand>
        <name>sucrose</name>
        <dbReference type="ChEBI" id="CHEBI:17992"/>
    </ligand>
</feature>
<feature type="binding site" evidence="1">
    <location>
        <position position="62"/>
    </location>
    <ligand>
        <name>sucrose</name>
        <dbReference type="ChEBI" id="CHEBI:17992"/>
    </ligand>
</feature>
<feature type="binding site" evidence="1">
    <location>
        <position position="148"/>
    </location>
    <ligand>
        <name>sucrose</name>
        <dbReference type="ChEBI" id="CHEBI:17992"/>
    </ligand>
</feature>
<feature type="binding site" evidence="1">
    <location>
        <position position="218"/>
    </location>
    <ligand>
        <name>sucrose</name>
        <dbReference type="ChEBI" id="CHEBI:17992"/>
    </ligand>
</feature>
<feature type="binding site" evidence="1">
    <location>
        <position position="219"/>
    </location>
    <ligand>
        <name>sucrose</name>
        <dbReference type="ChEBI" id="CHEBI:17992"/>
    </ligand>
</feature>
<feature type="site" description="Transition state stabilizer" evidence="1">
    <location>
        <position position="219"/>
    </location>
</feature>
<comment type="function">
    <text evidence="2">Catalyzes the synthesis of levan, a fructose polymer, by transferring the fructosyl moiety from sucrose to a growing acceptor molecule.</text>
</comment>
<comment type="catalytic activity">
    <reaction evidence="2">
        <text>[6)-beta-D-fructofuranosyl-(2-&gt;](n) alpha-D-glucopyranoside + sucrose = [6)-beta-D-fructofuranosyl-(2-&gt;](n+1) alpha-D-glucopyranoside + D-glucose</text>
        <dbReference type="Rhea" id="RHEA:13653"/>
        <dbReference type="Rhea" id="RHEA-COMP:13093"/>
        <dbReference type="Rhea" id="RHEA-COMP:13094"/>
        <dbReference type="ChEBI" id="CHEBI:4167"/>
        <dbReference type="ChEBI" id="CHEBI:17992"/>
        <dbReference type="ChEBI" id="CHEBI:134464"/>
        <dbReference type="EC" id="2.4.1.10"/>
    </reaction>
</comment>
<comment type="subcellular location">
    <subcellularLocation>
        <location evidence="2 3">Secreted</location>
    </subcellularLocation>
    <text evidence="3">Secreted in a temperature-dependent manner (PubMed:17147762). Secretion at low temperature is due to a combination of thermo-regulated transcription and secretion (PubMed:17147762).</text>
</comment>
<comment type="induction">
    <text evidence="3 4 5">The upstream region of the gene contains a phage-associated promoter element (PAPE), which also includes the first 48 nucleotides of lscB and is essential for expression of the gene (PubMed:24670199). Even though the upstream region of the gene is sufficient to promote expression, the expression level is enhanced by the presence of the 48-bp N-terminus of lscB (PubMed:24670199). Expression is induced by the transcriptional regulator LscR, which is able to bind specifically to lsc upstream PAPE sequence (PubMed:27664099). Transcription is temperature-dependent (PubMed:17147762). Expression is strongest during growth in early logarithmic phase at 18 degrees Celsius, a temperature fostering virulence of this pathogen (PubMed:17147762).</text>
</comment>
<comment type="disruption phenotype">
    <text evidence="2">Disruption mutant does not exhibit a levan-deficient phenotype (PubMed:11344135). The lscB-lscC double mutant is completely defective in levan formation and can be complemented by either lscB or lscC (PubMed:11344135).</text>
</comment>
<comment type="miscellaneous">
    <text evidence="2">Strain PG4180 contains three levansucrase-encoding genes: lscA, lscB and lscC (PubMed:11344135). Of the three copies, only lscB and lscC have been shown to be expressed while no expression was observed for lscA under the tested growth conditions (PubMed:11344135).</text>
</comment>
<comment type="similarity">
    <text evidence="7">Belongs to the glycosyl hydrolase 68 family.</text>
</comment>
<accession>Q71RT3</accession>
<name>LSCB_PSESG</name>
<protein>
    <recommendedName>
        <fullName evidence="6">Levansucrase LscB</fullName>
        <ecNumber evidence="2">2.4.1.10</ecNumber>
    </recommendedName>
    <alternativeName>
        <fullName evidence="7">Sucrose 6-fructosyltransferase</fullName>
    </alternativeName>
</protein>
<organism>
    <name type="scientific">Pseudomonas savastanoi pv. glycinea</name>
    <name type="common">Pseudomonas syringae pv. glycinea</name>
    <dbReference type="NCBI Taxonomy" id="318"/>
    <lineage>
        <taxon>Bacteria</taxon>
        <taxon>Pseudomonadati</taxon>
        <taxon>Pseudomonadota</taxon>
        <taxon>Gammaproteobacteria</taxon>
        <taxon>Pseudomonadales</taxon>
        <taxon>Pseudomonadaceae</taxon>
        <taxon>Pseudomonas</taxon>
    </lineage>
</organism>
<evidence type="ECO:0000250" key="1">
    <source>
        <dbReference type="UniProtKB" id="P05655"/>
    </source>
</evidence>
<evidence type="ECO:0000269" key="2">
    <source>
    </source>
</evidence>
<evidence type="ECO:0000269" key="3">
    <source>
    </source>
</evidence>
<evidence type="ECO:0000269" key="4">
    <source>
    </source>
</evidence>
<evidence type="ECO:0000269" key="5">
    <source>
    </source>
</evidence>
<evidence type="ECO:0000303" key="6">
    <source>
    </source>
</evidence>
<evidence type="ECO:0000305" key="7"/>
<proteinExistence type="evidence at protein level"/>
<gene>
    <name evidence="6" type="primary">lscB</name>
</gene>
<geneLocation type="plasmid" evidence="6">
    <name>p4180D</name>
</geneLocation>